<reference key="1">
    <citation type="journal article" date="2008" name="Cell. Mol. Life Sci.">
        <title>Molecular diversity and evolution of cystine knot toxins of the tarantula Chilobrachys jingzhao.</title>
        <authorList>
            <person name="Chen J."/>
            <person name="Deng M."/>
            <person name="He Q."/>
            <person name="Meng E."/>
            <person name="Jiang L."/>
            <person name="Liao Z."/>
            <person name="Rong M."/>
            <person name="Liang S."/>
        </authorList>
    </citation>
    <scope>NUCLEOTIDE SEQUENCE [LARGE SCALE MRNA]</scope>
    <source>
        <tissue>Venom gland</tissue>
    </source>
</reference>
<reference key="2">
    <citation type="journal article" date="2007" name="Proteomics">
        <title>Proteomic and peptidomic analysis of the venom from Chinese tarantula Chilobrachys jingzhao.</title>
        <authorList>
            <person name="Liao Z."/>
            <person name="Cao J."/>
            <person name="Li S."/>
            <person name="Yan X."/>
            <person name="Hu W."/>
            <person name="He Q."/>
            <person name="Chen J."/>
            <person name="Tang J."/>
            <person name="Xie J."/>
            <person name="Liang S."/>
        </authorList>
    </citation>
    <scope>PROTEIN SEQUENCE OF 40-74</scope>
    <scope>MASS SPECTROMETRY</scope>
    <source>
        <tissue>Venom</tissue>
    </source>
</reference>
<name>JZ50B_CHIGU</name>
<keyword id="KW-0903">Direct protein sequencing</keyword>
<keyword id="KW-1015">Disulfide bond</keyword>
<keyword id="KW-0872">Ion channel impairing toxin</keyword>
<keyword id="KW-0960">Knottin</keyword>
<keyword id="KW-0964">Secreted</keyword>
<keyword id="KW-0732">Signal</keyword>
<keyword id="KW-0800">Toxin</keyword>
<sequence>MNATIFAFLLLLNLAMHNATEQSSETDMDDTLLIPEINRGRCIEEGKWCPKKAPCCGRLECKGPSPKQKKCTRP</sequence>
<proteinExistence type="evidence at protein level"/>
<protein>
    <recommendedName>
        <fullName>U4-theraphotoxin-Cg1a</fullName>
        <shortName>U4-TRTX-Cg1a</shortName>
    </recommendedName>
    <alternativeName>
        <fullName>Jingzhaotoxin-50.2</fullName>
        <shortName>JZTX-50.2</shortName>
    </alternativeName>
    <alternativeName>
        <fullName>Peptide F7-7.25</fullName>
    </alternativeName>
</protein>
<evidence type="ECO:0000250" key="1"/>
<evidence type="ECO:0000255" key="2"/>
<evidence type="ECO:0000269" key="3">
    <source>
    </source>
</evidence>
<feature type="signal peptide" evidence="2">
    <location>
        <begin position="1"/>
        <end position="19"/>
    </location>
</feature>
<feature type="propeptide" id="PRO_0000398512" evidence="3">
    <location>
        <begin position="20"/>
        <end position="39"/>
    </location>
</feature>
<feature type="peptide" id="PRO_0000398513" description="U4-theraphotoxin-Cg1a">
    <location>
        <begin position="40"/>
        <end position="74"/>
    </location>
</feature>
<feature type="disulfide bond" evidence="1">
    <location>
        <begin position="42"/>
        <end position="56"/>
    </location>
</feature>
<feature type="disulfide bond" evidence="1">
    <location>
        <begin position="49"/>
        <end position="61"/>
    </location>
</feature>
<feature type="disulfide bond" evidence="1">
    <location>
        <begin position="55"/>
        <end position="71"/>
    </location>
</feature>
<dbReference type="EMBL" id="EU233843">
    <property type="protein sequence ID" value="ABY71662.1"/>
    <property type="molecule type" value="mRNA"/>
</dbReference>
<dbReference type="SMR" id="B1P1B2"/>
<dbReference type="ArachnoServer" id="AS000790">
    <property type="toxin name" value="U4-theraphotoxin-Cg1a"/>
</dbReference>
<dbReference type="GO" id="GO:0005576">
    <property type="term" value="C:extracellular region"/>
    <property type="evidence" value="ECO:0007669"/>
    <property type="project" value="UniProtKB-SubCell"/>
</dbReference>
<dbReference type="GO" id="GO:0099106">
    <property type="term" value="F:ion channel regulator activity"/>
    <property type="evidence" value="ECO:0007669"/>
    <property type="project" value="UniProtKB-KW"/>
</dbReference>
<dbReference type="GO" id="GO:0090729">
    <property type="term" value="F:toxin activity"/>
    <property type="evidence" value="ECO:0007669"/>
    <property type="project" value="UniProtKB-KW"/>
</dbReference>
<organism>
    <name type="scientific">Chilobrachys guangxiensis</name>
    <name type="common">Chinese earth tiger tarantula</name>
    <name type="synonym">Chilobrachys jingzhao</name>
    <dbReference type="NCBI Taxonomy" id="278060"/>
    <lineage>
        <taxon>Eukaryota</taxon>
        <taxon>Metazoa</taxon>
        <taxon>Ecdysozoa</taxon>
        <taxon>Arthropoda</taxon>
        <taxon>Chelicerata</taxon>
        <taxon>Arachnida</taxon>
        <taxon>Araneae</taxon>
        <taxon>Mygalomorphae</taxon>
        <taxon>Theraphosidae</taxon>
        <taxon>Chilobrachys</taxon>
    </lineage>
</organism>
<comment type="function">
    <text>Probable ion channel inhibitor.</text>
</comment>
<comment type="subcellular location">
    <subcellularLocation>
        <location>Secreted</location>
    </subcellularLocation>
</comment>
<comment type="tissue specificity">
    <text>Expressed by the venom gland.</text>
</comment>
<comment type="domain">
    <text evidence="1">The presence of a 'disulfide through disulfide knot' structurally defines this protein as a knottin.</text>
</comment>
<comment type="mass spectrometry">
    <text>Monoisotopic mass.</text>
</comment>
<comment type="similarity">
    <text>Belongs to the neurotoxin 36 family. 01 subfamily.</text>
</comment>
<accession>B1P1B2</accession>